<comment type="function">
    <text>NCS has antibiotic activity (for Gram-positive bacteria) and antitumor activity (for certain mouse tumors). NCS binds non-covalently to a chromophore which is the cytotoxic and mutagenic component of the antibiotic. The chromophore binds to DNA as a weak intercalator and causes single- and double-strand breaks.</text>
</comment>
<comment type="similarity">
    <text evidence="2">Belongs to the neocarzinostatin family.</text>
</comment>
<protein>
    <recommendedName>
        <fullName>Neocarzinostatin</fullName>
        <shortName>NCS</shortName>
    </recommendedName>
    <alternativeName>
        <fullName>Mitomalcin</fullName>
        <shortName>MMC</shortName>
    </alternativeName>
</protein>
<feature type="chain" id="PRO_0000213118" description="Neocarzinostatin">
    <location>
        <begin position="1"/>
        <end position="113"/>
    </location>
</feature>
<feature type="disulfide bond" evidence="1">
    <location>
        <begin position="37"/>
        <end position="47"/>
    </location>
</feature>
<feature type="disulfide bond" evidence="1">
    <location>
        <begin position="88"/>
        <end position="93"/>
    </location>
</feature>
<feature type="strand" evidence="3">
    <location>
        <begin position="4"/>
        <end position="9"/>
    </location>
</feature>
<feature type="strand" evidence="3">
    <location>
        <begin position="18"/>
        <end position="25"/>
    </location>
</feature>
<feature type="strand" evidence="3">
    <location>
        <begin position="31"/>
        <end position="41"/>
    </location>
</feature>
<feature type="strand" evidence="3">
    <location>
        <begin position="44"/>
        <end position="56"/>
    </location>
</feature>
<feature type="strand" evidence="3">
    <location>
        <begin position="63"/>
        <end position="68"/>
    </location>
</feature>
<feature type="strand" evidence="3">
    <location>
        <begin position="71"/>
        <end position="76"/>
    </location>
</feature>
<feature type="strand" evidence="3">
    <location>
        <begin position="82"/>
        <end position="87"/>
    </location>
</feature>
<feature type="turn" evidence="3">
    <location>
        <begin position="88"/>
        <end position="90"/>
    </location>
</feature>
<feature type="strand" evidence="3">
    <location>
        <begin position="91"/>
        <end position="98"/>
    </location>
</feature>
<feature type="strand" evidence="3">
    <location>
        <begin position="100"/>
        <end position="102"/>
    </location>
</feature>
<proteinExistence type="evidence at protein level"/>
<reference key="1">
    <citation type="journal article" date="1991" name="Biochemistry">
        <title>Two- and three-dimensional proton NMR studies of apo-neocarzinostatin.</title>
        <authorList>
            <person name="Gao X."/>
            <person name="Burkhart W."/>
        </authorList>
    </citation>
    <scope>PROTEIN SEQUENCE</scope>
</reference>
<evidence type="ECO:0000250" key="1"/>
<evidence type="ECO:0000305" key="2"/>
<evidence type="ECO:0007829" key="3">
    <source>
        <dbReference type="PDB" id="4JW3"/>
    </source>
</evidence>
<accession>P0A3S0</accession>
<accession>P01550</accession>
<dbReference type="PIR" id="B40278">
    <property type="entry name" value="B40278"/>
</dbReference>
<dbReference type="PDB" id="4JW3">
    <property type="method" value="X-ray"/>
    <property type="resolution" value="2.60 A"/>
    <property type="chains" value="A/B=1-112"/>
</dbReference>
<dbReference type="PDBsum" id="4JW3"/>
<dbReference type="BMRB" id="P0A3S0"/>
<dbReference type="SMR" id="P0A3S0"/>
<dbReference type="DrugBank" id="DB04408">
    <property type="generic name" value="Ncs-Chromophore"/>
</dbReference>
<dbReference type="EvolutionaryTrace" id="P0A3S0"/>
<dbReference type="GO" id="GO:0003677">
    <property type="term" value="F:DNA binding"/>
    <property type="evidence" value="ECO:0007669"/>
    <property type="project" value="UniProtKB-KW"/>
</dbReference>
<dbReference type="GO" id="GO:0042742">
    <property type="term" value="P:defense response to bacterium"/>
    <property type="evidence" value="ECO:0007669"/>
    <property type="project" value="UniProtKB-KW"/>
</dbReference>
<dbReference type="Gene3D" id="2.60.40.230">
    <property type="entry name" value="Neocarzinostatin-like"/>
    <property type="match status" value="1"/>
</dbReference>
<dbReference type="InterPro" id="IPR027273">
    <property type="entry name" value="Neocarzinostatin-like"/>
</dbReference>
<dbReference type="InterPro" id="IPR002186">
    <property type="entry name" value="Neocarzinostatin_fam"/>
</dbReference>
<dbReference type="NCBIfam" id="NF040680">
    <property type="entry name" value="chromo_anti"/>
    <property type="match status" value="1"/>
</dbReference>
<dbReference type="Pfam" id="PF00960">
    <property type="entry name" value="Neocarzinostat"/>
    <property type="match status" value="1"/>
</dbReference>
<dbReference type="PRINTS" id="PR01885">
    <property type="entry name" value="MACROMOMYCIN"/>
</dbReference>
<dbReference type="SUPFAM" id="SSF49319">
    <property type="entry name" value="Actinoxanthin-like"/>
    <property type="match status" value="1"/>
</dbReference>
<gene>
    <name type="primary">ncsA</name>
</gene>
<organism>
    <name type="scientific">Streptomyces malayensis</name>
    <dbReference type="NCBI Taxonomy" id="1918"/>
    <lineage>
        <taxon>Bacteria</taxon>
        <taxon>Bacillati</taxon>
        <taxon>Actinomycetota</taxon>
        <taxon>Actinomycetes</taxon>
        <taxon>Kitasatosporales</taxon>
        <taxon>Streptomycetaceae</taxon>
        <taxon>Streptomyces</taxon>
    </lineage>
</organism>
<sequence>AAPTATVTPSSGLSDGTVVKVAGAGLQAGTAYDVGQCAWVDTGVLACNPADFSSVTADANGSASTSLTVRRSFEGFLFDGTRWGTVDCTTAACQVGLSDAAGNGPEGVAISFN</sequence>
<name>NCZS_STRML</name>
<keyword id="KW-0002">3D-structure</keyword>
<keyword id="KW-0044">Antibiotic</keyword>
<keyword id="KW-0929">Antimicrobial</keyword>
<keyword id="KW-0903">Direct protein sequencing</keyword>
<keyword id="KW-1015">Disulfide bond</keyword>
<keyword id="KW-0238">DNA-binding</keyword>